<dbReference type="EC" id="5.1.3.1" evidence="2"/>
<dbReference type="EMBL" id="CR860719">
    <property type="protein sequence ID" value="CAH92834.1"/>
    <property type="molecule type" value="mRNA"/>
</dbReference>
<dbReference type="RefSeq" id="NP_001126655.1">
    <property type="nucleotide sequence ID" value="NM_001133183.1"/>
</dbReference>
<dbReference type="SMR" id="Q5R5Y2"/>
<dbReference type="STRING" id="9601.ENSPPYP00000014676"/>
<dbReference type="GeneID" id="100173655"/>
<dbReference type="KEGG" id="pon:100173655"/>
<dbReference type="CTD" id="6120"/>
<dbReference type="eggNOG" id="KOG3111">
    <property type="taxonomic scope" value="Eukaryota"/>
</dbReference>
<dbReference type="InParanoid" id="Q5R5Y2"/>
<dbReference type="OrthoDB" id="1927044at2759"/>
<dbReference type="Proteomes" id="UP000001595">
    <property type="component" value="Unplaced"/>
</dbReference>
<dbReference type="GO" id="GO:0004750">
    <property type="term" value="F:D-ribulose-phosphate 3-epimerase activity"/>
    <property type="evidence" value="ECO:0000250"/>
    <property type="project" value="UniProtKB"/>
</dbReference>
<dbReference type="GO" id="GO:0046872">
    <property type="term" value="F:metal ion binding"/>
    <property type="evidence" value="ECO:0000250"/>
    <property type="project" value="UniProtKB"/>
</dbReference>
<dbReference type="GO" id="GO:0005975">
    <property type="term" value="P:carbohydrate metabolic process"/>
    <property type="evidence" value="ECO:0000250"/>
    <property type="project" value="UniProtKB"/>
</dbReference>
<dbReference type="GO" id="GO:0006098">
    <property type="term" value="P:pentose-phosphate shunt"/>
    <property type="evidence" value="ECO:0000250"/>
    <property type="project" value="UniProtKB"/>
</dbReference>
<dbReference type="CDD" id="cd00429">
    <property type="entry name" value="RPE"/>
    <property type="match status" value="1"/>
</dbReference>
<dbReference type="FunFam" id="3.20.20.70:FF:000191">
    <property type="entry name" value="ribulose-phosphate 3-epimerase isoform X2"/>
    <property type="match status" value="1"/>
</dbReference>
<dbReference type="Gene3D" id="3.20.20.70">
    <property type="entry name" value="Aldolase class I"/>
    <property type="match status" value="1"/>
</dbReference>
<dbReference type="HAMAP" id="MF_02227">
    <property type="entry name" value="RPE"/>
    <property type="match status" value="1"/>
</dbReference>
<dbReference type="InterPro" id="IPR013785">
    <property type="entry name" value="Aldolase_TIM"/>
</dbReference>
<dbReference type="InterPro" id="IPR026019">
    <property type="entry name" value="Ribul_P_3_epim"/>
</dbReference>
<dbReference type="InterPro" id="IPR000056">
    <property type="entry name" value="Ribul_P_3_epim-like"/>
</dbReference>
<dbReference type="InterPro" id="IPR011060">
    <property type="entry name" value="RibuloseP-bd_barrel"/>
</dbReference>
<dbReference type="NCBIfam" id="NF004076">
    <property type="entry name" value="PRK05581.1-4"/>
    <property type="match status" value="1"/>
</dbReference>
<dbReference type="NCBIfam" id="TIGR01163">
    <property type="entry name" value="rpe"/>
    <property type="match status" value="1"/>
</dbReference>
<dbReference type="PANTHER" id="PTHR11749">
    <property type="entry name" value="RIBULOSE-5-PHOSPHATE-3-EPIMERASE"/>
    <property type="match status" value="1"/>
</dbReference>
<dbReference type="Pfam" id="PF00834">
    <property type="entry name" value="Ribul_P_3_epim"/>
    <property type="match status" value="1"/>
</dbReference>
<dbReference type="PIRSF" id="PIRSF001461">
    <property type="entry name" value="RPE"/>
    <property type="match status" value="1"/>
</dbReference>
<dbReference type="SUPFAM" id="SSF51366">
    <property type="entry name" value="Ribulose-phoshate binding barrel"/>
    <property type="match status" value="1"/>
</dbReference>
<dbReference type="PROSITE" id="PS01085">
    <property type="entry name" value="RIBUL_P_3_EPIMER_1"/>
    <property type="match status" value="1"/>
</dbReference>
<dbReference type="PROSITE" id="PS01086">
    <property type="entry name" value="RIBUL_P_3_EPIMER_2"/>
    <property type="match status" value="1"/>
</dbReference>
<proteinExistence type="evidence at transcript level"/>
<reference key="1">
    <citation type="submission" date="2004-11" db="EMBL/GenBank/DDBJ databases">
        <authorList>
            <consortium name="The German cDNA consortium"/>
        </authorList>
    </citation>
    <scope>NUCLEOTIDE SEQUENCE [LARGE SCALE MRNA]</scope>
    <source>
        <tissue>Brain cortex</tissue>
    </source>
</reference>
<organism>
    <name type="scientific">Pongo abelii</name>
    <name type="common">Sumatran orangutan</name>
    <name type="synonym">Pongo pygmaeus abelii</name>
    <dbReference type="NCBI Taxonomy" id="9601"/>
    <lineage>
        <taxon>Eukaryota</taxon>
        <taxon>Metazoa</taxon>
        <taxon>Chordata</taxon>
        <taxon>Craniata</taxon>
        <taxon>Vertebrata</taxon>
        <taxon>Euteleostomi</taxon>
        <taxon>Mammalia</taxon>
        <taxon>Eutheria</taxon>
        <taxon>Euarchontoglires</taxon>
        <taxon>Primates</taxon>
        <taxon>Haplorrhini</taxon>
        <taxon>Catarrhini</taxon>
        <taxon>Hominidae</taxon>
        <taxon>Pongo</taxon>
    </lineage>
</organism>
<evidence type="ECO:0000250" key="1">
    <source>
        <dbReference type="UniProtKB" id="P32719"/>
    </source>
</evidence>
<evidence type="ECO:0000250" key="2">
    <source>
        <dbReference type="UniProtKB" id="Q96AT9"/>
    </source>
</evidence>
<evidence type="ECO:0000305" key="3"/>
<gene>
    <name type="primary">RPE</name>
</gene>
<keyword id="KW-0007">Acetylation</keyword>
<keyword id="KW-0119">Carbohydrate metabolism</keyword>
<keyword id="KW-0170">Cobalt</keyword>
<keyword id="KW-0408">Iron</keyword>
<keyword id="KW-0413">Isomerase</keyword>
<keyword id="KW-0464">Manganese</keyword>
<keyword id="KW-0479">Metal-binding</keyword>
<keyword id="KW-1185">Reference proteome</keyword>
<keyword id="KW-0862">Zinc</keyword>
<feature type="initiator methionine" description="Removed" evidence="2">
    <location>
        <position position="1"/>
    </location>
</feature>
<feature type="chain" id="PRO_0000171589" description="Ribulose-phosphate 3-epimerase">
    <location>
        <begin position="2"/>
        <end position="228"/>
    </location>
</feature>
<feature type="active site" description="Proton acceptor" evidence="1">
    <location>
        <position position="37"/>
    </location>
</feature>
<feature type="active site" description="Proton donor" evidence="1">
    <location>
        <position position="175"/>
    </location>
</feature>
<feature type="binding site" evidence="1">
    <location>
        <position position="10"/>
    </location>
    <ligand>
        <name>substrate</name>
    </ligand>
</feature>
<feature type="binding site" evidence="1">
    <location>
        <position position="35"/>
    </location>
    <ligand>
        <name>a divalent metal cation</name>
        <dbReference type="ChEBI" id="CHEBI:60240"/>
    </ligand>
</feature>
<feature type="binding site" evidence="1">
    <location>
        <position position="37"/>
    </location>
    <ligand>
        <name>a divalent metal cation</name>
        <dbReference type="ChEBI" id="CHEBI:60240"/>
    </ligand>
</feature>
<feature type="binding site" evidence="1">
    <location>
        <position position="70"/>
    </location>
    <ligand>
        <name>a divalent metal cation</name>
        <dbReference type="ChEBI" id="CHEBI:60240"/>
    </ligand>
</feature>
<feature type="binding site" evidence="1">
    <location>
        <position position="70"/>
    </location>
    <ligand>
        <name>substrate</name>
    </ligand>
</feature>
<feature type="binding site" evidence="1">
    <location>
        <begin position="146"/>
        <end position="149"/>
    </location>
    <ligand>
        <name>substrate</name>
    </ligand>
</feature>
<feature type="binding site" evidence="1">
    <location>
        <begin position="175"/>
        <end position="177"/>
    </location>
    <ligand>
        <name>substrate</name>
    </ligand>
</feature>
<feature type="binding site" evidence="1">
    <location>
        <position position="175"/>
    </location>
    <ligand>
        <name>a divalent metal cation</name>
        <dbReference type="ChEBI" id="CHEBI:60240"/>
    </ligand>
</feature>
<feature type="binding site" evidence="1">
    <location>
        <begin position="197"/>
        <end position="198"/>
    </location>
    <ligand>
        <name>substrate</name>
    </ligand>
</feature>
<feature type="modified residue" description="N-acetylalanine" evidence="2">
    <location>
        <position position="2"/>
    </location>
</feature>
<comment type="function">
    <text evidence="2">Catalyzes the reversible epimerization of D-ribulose 5-phosphate to D-xylulose 5-phosphate.</text>
</comment>
<comment type="catalytic activity">
    <reaction evidence="2">
        <text>D-ribulose 5-phosphate = D-xylulose 5-phosphate</text>
        <dbReference type="Rhea" id="RHEA:13677"/>
        <dbReference type="ChEBI" id="CHEBI:57737"/>
        <dbReference type="ChEBI" id="CHEBI:58121"/>
        <dbReference type="EC" id="5.1.3.1"/>
    </reaction>
</comment>
<comment type="cofactor">
    <cofactor evidence="2">
        <name>Fe(2+)</name>
        <dbReference type="ChEBI" id="CHEBI:29033"/>
    </cofactor>
    <cofactor evidence="2">
        <name>Mn(2+)</name>
        <dbReference type="ChEBI" id="CHEBI:29035"/>
    </cofactor>
    <cofactor evidence="2">
        <name>Zn(2+)</name>
        <dbReference type="ChEBI" id="CHEBI:29105"/>
    </cofactor>
    <cofactor evidence="2">
        <name>Co(2+)</name>
        <dbReference type="ChEBI" id="CHEBI:48828"/>
    </cofactor>
    <text evidence="2">Binds 1 divalent metal cation per subunit. Active with Fe(2+), and probably also with Mn(2+), Zn(2+) and Co(2+).</text>
</comment>
<comment type="pathway">
    <text evidence="2">Carbohydrate degradation.</text>
</comment>
<comment type="subunit">
    <text evidence="2">Homodimer.</text>
</comment>
<comment type="similarity">
    <text evidence="3">Belongs to the ribulose-phosphate 3-epimerase family.</text>
</comment>
<accession>Q5R5Y2</accession>
<protein>
    <recommendedName>
        <fullName>Ribulose-phosphate 3-epimerase</fullName>
        <ecNumber evidence="2">5.1.3.1</ecNumber>
    </recommendedName>
    <alternativeName>
        <fullName>Ribulose-5-phosphate-3-epimerase</fullName>
    </alternativeName>
</protein>
<sequence length="228" mass="24898">MASGCKIGPSILNSDLANLGAECLRMLDSGADYLHLDVMDGHFVPNITFGHPVVESLRKQLGQDPFFDMHMMVSKPEQWVKPMAVAGANQYAFHLEATENPGALIKDIRENGMKVGLAIKPGTSVEYLAPWANQIDMALVMTVEPGFGGQKFMEDMMPKVHWLRTQFPSLDIEVDGGVGPDTVHKCAEAGANMIVSGSAIMRSEDPRSVINLLRNVCSEAAQKRSLDR</sequence>
<name>RPE_PONAB</name>